<keyword id="KW-0963">Cytoplasm</keyword>
<keyword id="KW-0369">Histidine metabolism</keyword>
<keyword id="KW-0378">Hydrolase</keyword>
<keyword id="KW-0408">Iron</keyword>
<keyword id="KW-0479">Metal-binding</keyword>
<keyword id="KW-0862">Zinc</keyword>
<comment type="function">
    <text evidence="1">Catalyzes the hydrolytic cleavage of the carbon-nitrogen bond in imidazolone-5-propanoate to yield N-formimidoyl-L-glutamate. It is the third step in the universal histidine degradation pathway.</text>
</comment>
<comment type="catalytic activity">
    <reaction evidence="1">
        <text>4-imidazolone-5-propanoate + H2O = N-formimidoyl-L-glutamate</text>
        <dbReference type="Rhea" id="RHEA:23660"/>
        <dbReference type="ChEBI" id="CHEBI:15377"/>
        <dbReference type="ChEBI" id="CHEBI:58928"/>
        <dbReference type="ChEBI" id="CHEBI:77893"/>
        <dbReference type="EC" id="3.5.2.7"/>
    </reaction>
</comment>
<comment type="cofactor">
    <cofactor evidence="1">
        <name>Zn(2+)</name>
        <dbReference type="ChEBI" id="CHEBI:29105"/>
    </cofactor>
    <cofactor evidence="1">
        <name>Fe(3+)</name>
        <dbReference type="ChEBI" id="CHEBI:29034"/>
    </cofactor>
    <text evidence="1">Binds 1 zinc or iron ion per subunit.</text>
</comment>
<comment type="pathway">
    <text evidence="1">Amino-acid degradation; L-histidine degradation into L-glutamate; N-formimidoyl-L-glutamate from L-histidine: step 3/3.</text>
</comment>
<comment type="subcellular location">
    <subcellularLocation>
        <location evidence="1">Cytoplasm</location>
    </subcellularLocation>
</comment>
<comment type="similarity">
    <text evidence="1">Belongs to the metallo-dependent hydrolases superfamily. HutI family.</text>
</comment>
<reference key="1">
    <citation type="submission" date="2007-05" db="EMBL/GenBank/DDBJ databases">
        <title>Complete sequence of Pseudomonas putida F1.</title>
        <authorList>
            <consortium name="US DOE Joint Genome Institute"/>
            <person name="Copeland A."/>
            <person name="Lucas S."/>
            <person name="Lapidus A."/>
            <person name="Barry K."/>
            <person name="Detter J.C."/>
            <person name="Glavina del Rio T."/>
            <person name="Hammon N."/>
            <person name="Israni S."/>
            <person name="Dalin E."/>
            <person name="Tice H."/>
            <person name="Pitluck S."/>
            <person name="Chain P."/>
            <person name="Malfatti S."/>
            <person name="Shin M."/>
            <person name="Vergez L."/>
            <person name="Schmutz J."/>
            <person name="Larimer F."/>
            <person name="Land M."/>
            <person name="Hauser L."/>
            <person name="Kyrpides N."/>
            <person name="Lykidis A."/>
            <person name="Parales R."/>
            <person name="Richardson P."/>
        </authorList>
    </citation>
    <scope>NUCLEOTIDE SEQUENCE [LARGE SCALE GENOMIC DNA]</scope>
    <source>
        <strain>ATCC 700007 / DSM 6899 / JCM 31910 / BCRC 17059 / LMG 24140 / F1</strain>
    </source>
</reference>
<feature type="chain" id="PRO_1000007146" description="Imidazolonepropionase">
    <location>
        <begin position="1"/>
        <end position="401"/>
    </location>
</feature>
<feature type="binding site" evidence="1">
    <location>
        <position position="66"/>
    </location>
    <ligand>
        <name>Fe(3+)</name>
        <dbReference type="ChEBI" id="CHEBI:29034"/>
    </ligand>
</feature>
<feature type="binding site" evidence="1">
    <location>
        <position position="66"/>
    </location>
    <ligand>
        <name>Zn(2+)</name>
        <dbReference type="ChEBI" id="CHEBI:29105"/>
    </ligand>
</feature>
<feature type="binding site" evidence="1">
    <location>
        <position position="68"/>
    </location>
    <ligand>
        <name>Fe(3+)</name>
        <dbReference type="ChEBI" id="CHEBI:29034"/>
    </ligand>
</feature>
<feature type="binding site" evidence="1">
    <location>
        <position position="68"/>
    </location>
    <ligand>
        <name>Zn(2+)</name>
        <dbReference type="ChEBI" id="CHEBI:29105"/>
    </ligand>
</feature>
<feature type="binding site" evidence="1">
    <location>
        <position position="75"/>
    </location>
    <ligand>
        <name>4-imidazolone-5-propanoate</name>
        <dbReference type="ChEBI" id="CHEBI:77893"/>
    </ligand>
</feature>
<feature type="binding site" evidence="1">
    <location>
        <position position="138"/>
    </location>
    <ligand>
        <name>4-imidazolone-5-propanoate</name>
        <dbReference type="ChEBI" id="CHEBI:77893"/>
    </ligand>
</feature>
<feature type="binding site" evidence="1">
    <location>
        <position position="138"/>
    </location>
    <ligand>
        <name>N-formimidoyl-L-glutamate</name>
        <dbReference type="ChEBI" id="CHEBI:58928"/>
    </ligand>
</feature>
<feature type="binding site" evidence="1">
    <location>
        <position position="171"/>
    </location>
    <ligand>
        <name>4-imidazolone-5-propanoate</name>
        <dbReference type="ChEBI" id="CHEBI:77893"/>
    </ligand>
</feature>
<feature type="binding site" evidence="1">
    <location>
        <position position="236"/>
    </location>
    <ligand>
        <name>Fe(3+)</name>
        <dbReference type="ChEBI" id="CHEBI:29034"/>
    </ligand>
</feature>
<feature type="binding site" evidence="1">
    <location>
        <position position="236"/>
    </location>
    <ligand>
        <name>Zn(2+)</name>
        <dbReference type="ChEBI" id="CHEBI:29105"/>
    </ligand>
</feature>
<feature type="binding site" evidence="1">
    <location>
        <position position="239"/>
    </location>
    <ligand>
        <name>4-imidazolone-5-propanoate</name>
        <dbReference type="ChEBI" id="CHEBI:77893"/>
    </ligand>
</feature>
<feature type="binding site" evidence="1">
    <location>
        <position position="311"/>
    </location>
    <ligand>
        <name>Fe(3+)</name>
        <dbReference type="ChEBI" id="CHEBI:29034"/>
    </ligand>
</feature>
<feature type="binding site" evidence="1">
    <location>
        <position position="311"/>
    </location>
    <ligand>
        <name>Zn(2+)</name>
        <dbReference type="ChEBI" id="CHEBI:29105"/>
    </ligand>
</feature>
<feature type="binding site" evidence="1">
    <location>
        <position position="313"/>
    </location>
    <ligand>
        <name>N-formimidoyl-L-glutamate</name>
        <dbReference type="ChEBI" id="CHEBI:58928"/>
    </ligand>
</feature>
<feature type="binding site" evidence="1">
    <location>
        <position position="315"/>
    </location>
    <ligand>
        <name>N-formimidoyl-L-glutamate</name>
        <dbReference type="ChEBI" id="CHEBI:58928"/>
    </ligand>
</feature>
<feature type="binding site" evidence="1">
    <location>
        <position position="316"/>
    </location>
    <ligand>
        <name>4-imidazolone-5-propanoate</name>
        <dbReference type="ChEBI" id="CHEBI:77893"/>
    </ligand>
</feature>
<organism>
    <name type="scientific">Pseudomonas putida (strain ATCC 700007 / DSM 6899 / JCM 31910 / BCRC 17059 / LMG 24140 / F1)</name>
    <dbReference type="NCBI Taxonomy" id="351746"/>
    <lineage>
        <taxon>Bacteria</taxon>
        <taxon>Pseudomonadati</taxon>
        <taxon>Pseudomonadota</taxon>
        <taxon>Gammaproteobacteria</taxon>
        <taxon>Pseudomonadales</taxon>
        <taxon>Pseudomonadaceae</taxon>
        <taxon>Pseudomonas</taxon>
    </lineage>
</organism>
<dbReference type="EC" id="3.5.2.7" evidence="1"/>
<dbReference type="EMBL" id="CP000712">
    <property type="protein sequence ID" value="ABQ81024.1"/>
    <property type="molecule type" value="Genomic_DNA"/>
</dbReference>
<dbReference type="SMR" id="A5WA64"/>
<dbReference type="KEGG" id="ppf:Pput_4904"/>
<dbReference type="eggNOG" id="COG1228">
    <property type="taxonomic scope" value="Bacteria"/>
</dbReference>
<dbReference type="HOGENOM" id="CLU_041647_0_0_6"/>
<dbReference type="UniPathway" id="UPA00379">
    <property type="reaction ID" value="UER00551"/>
</dbReference>
<dbReference type="GO" id="GO:0005737">
    <property type="term" value="C:cytoplasm"/>
    <property type="evidence" value="ECO:0007669"/>
    <property type="project" value="UniProtKB-SubCell"/>
</dbReference>
<dbReference type="GO" id="GO:0050480">
    <property type="term" value="F:imidazolonepropionase activity"/>
    <property type="evidence" value="ECO:0007669"/>
    <property type="project" value="UniProtKB-UniRule"/>
</dbReference>
<dbReference type="GO" id="GO:0005506">
    <property type="term" value="F:iron ion binding"/>
    <property type="evidence" value="ECO:0007669"/>
    <property type="project" value="UniProtKB-UniRule"/>
</dbReference>
<dbReference type="GO" id="GO:0008270">
    <property type="term" value="F:zinc ion binding"/>
    <property type="evidence" value="ECO:0007669"/>
    <property type="project" value="UniProtKB-UniRule"/>
</dbReference>
<dbReference type="GO" id="GO:0019556">
    <property type="term" value="P:L-histidine catabolic process to glutamate and formamide"/>
    <property type="evidence" value="ECO:0007669"/>
    <property type="project" value="UniProtKB-UniPathway"/>
</dbReference>
<dbReference type="GO" id="GO:0019557">
    <property type="term" value="P:L-histidine catabolic process to glutamate and formate"/>
    <property type="evidence" value="ECO:0007669"/>
    <property type="project" value="UniProtKB-UniPathway"/>
</dbReference>
<dbReference type="CDD" id="cd01296">
    <property type="entry name" value="Imidazolone-5PH"/>
    <property type="match status" value="1"/>
</dbReference>
<dbReference type="FunFam" id="3.20.20.140:FF:000007">
    <property type="entry name" value="Imidazolonepropionase"/>
    <property type="match status" value="1"/>
</dbReference>
<dbReference type="Gene3D" id="3.20.20.140">
    <property type="entry name" value="Metal-dependent hydrolases"/>
    <property type="match status" value="1"/>
</dbReference>
<dbReference type="Gene3D" id="2.30.40.10">
    <property type="entry name" value="Urease, subunit C, domain 1"/>
    <property type="match status" value="1"/>
</dbReference>
<dbReference type="HAMAP" id="MF_00372">
    <property type="entry name" value="HutI"/>
    <property type="match status" value="1"/>
</dbReference>
<dbReference type="InterPro" id="IPR006680">
    <property type="entry name" value="Amidohydro-rel"/>
</dbReference>
<dbReference type="InterPro" id="IPR005920">
    <property type="entry name" value="HutI"/>
</dbReference>
<dbReference type="InterPro" id="IPR011059">
    <property type="entry name" value="Metal-dep_hydrolase_composite"/>
</dbReference>
<dbReference type="InterPro" id="IPR032466">
    <property type="entry name" value="Metal_Hydrolase"/>
</dbReference>
<dbReference type="NCBIfam" id="TIGR01224">
    <property type="entry name" value="hutI"/>
    <property type="match status" value="1"/>
</dbReference>
<dbReference type="PANTHER" id="PTHR42752">
    <property type="entry name" value="IMIDAZOLONEPROPIONASE"/>
    <property type="match status" value="1"/>
</dbReference>
<dbReference type="PANTHER" id="PTHR42752:SF1">
    <property type="entry name" value="IMIDAZOLONEPROPIONASE-RELATED"/>
    <property type="match status" value="1"/>
</dbReference>
<dbReference type="Pfam" id="PF01979">
    <property type="entry name" value="Amidohydro_1"/>
    <property type="match status" value="1"/>
</dbReference>
<dbReference type="SUPFAM" id="SSF51338">
    <property type="entry name" value="Composite domain of metallo-dependent hydrolases"/>
    <property type="match status" value="1"/>
</dbReference>
<dbReference type="SUPFAM" id="SSF51556">
    <property type="entry name" value="Metallo-dependent hydrolases"/>
    <property type="match status" value="1"/>
</dbReference>
<name>HUTI_PSEP1</name>
<evidence type="ECO:0000255" key="1">
    <source>
        <dbReference type="HAMAP-Rule" id="MF_00372"/>
    </source>
</evidence>
<sequence length="401" mass="43026">MRTLWQHCHVATMADGRYSAIEDAAIVTSAGLIEWIGPRAELAPVEADRTVDLGGAWVTPGLIDCHTHAVFGGNRSGEFEQRLQGVSYAEIAAQGGGIASTVRATRAASEDELFASARQRVQALMRDGVTTLEVKSGYGLDLANERKMLRVARRLADELPLTVRATCLAAHALPPEYAGRADDYIAHICDEMLPALAGEGLVDAVDAFCEHLAFSPAQVERLFIKARELGLPVKLHAEQLSSLHGSSLAARYQALSADHLEFMTEEDAVAMANAGTVAVLLPGAFYFLRETQLPPMDALRRHGVKIALASDLNPGTSPGLSLRLMLNMGCTCFRMTPEEALAGVTVHAATALGLGDSHGSLQVGKVADFVAWQIERPADLAYWLGGDLPKRVVRMGHEISN</sequence>
<gene>
    <name evidence="1" type="primary">hutI</name>
    <name type="ordered locus">Pput_4904</name>
</gene>
<protein>
    <recommendedName>
        <fullName evidence="1">Imidazolonepropionase</fullName>
        <ecNumber evidence="1">3.5.2.7</ecNumber>
    </recommendedName>
    <alternativeName>
        <fullName evidence="1">Imidazolone-5-propionate hydrolase</fullName>
    </alternativeName>
</protein>
<accession>A5WA64</accession>
<proteinExistence type="inferred from homology"/>